<organism>
    <name type="scientific">Mycobacterium tuberculosis (strain ATCC 25618 / H37Rv)</name>
    <dbReference type="NCBI Taxonomy" id="83332"/>
    <lineage>
        <taxon>Bacteria</taxon>
        <taxon>Bacillati</taxon>
        <taxon>Actinomycetota</taxon>
        <taxon>Actinomycetes</taxon>
        <taxon>Mycobacteriales</taxon>
        <taxon>Mycobacteriaceae</taxon>
        <taxon>Mycobacterium</taxon>
        <taxon>Mycobacterium tuberculosis complex</taxon>
    </lineage>
</organism>
<feature type="chain" id="PRO_0000451298" description="Medium/long-chain-fatty-acid--CoA ligase FadD6">
    <location>
        <begin position="1"/>
        <end position="597"/>
    </location>
</feature>
<protein>
    <recommendedName>
        <fullName evidence="5">Medium/long-chain-fatty-acid--CoA ligase FadD6</fullName>
        <ecNumber evidence="1 2">6.2.1.2</ecNumber>
        <ecNumber evidence="1 2 3">6.2.1.3</ecNumber>
    </recommendedName>
    <alternativeName>
        <fullName evidence="4">FACL6</fullName>
    </alternativeName>
</protein>
<gene>
    <name evidence="6" type="primary">fadD6</name>
    <name evidence="6" type="ordered locus">Rv1206</name>
</gene>
<dbReference type="EC" id="6.2.1.2" evidence="1 2"/>
<dbReference type="EC" id="6.2.1.3" evidence="1 2 3"/>
<dbReference type="EMBL" id="AL123456">
    <property type="protein sequence ID" value="CCP43962.1"/>
    <property type="molecule type" value="Genomic_DNA"/>
</dbReference>
<dbReference type="RefSeq" id="NP_215722.1">
    <property type="nucleotide sequence ID" value="NC_000962.3"/>
</dbReference>
<dbReference type="RefSeq" id="WP_003406240.1">
    <property type="nucleotide sequence ID" value="NZ_NVQJ01000039.1"/>
</dbReference>
<dbReference type="SMR" id="O05307"/>
<dbReference type="FunCoup" id="O05307">
    <property type="interactions" value="45"/>
</dbReference>
<dbReference type="STRING" id="83332.Rv1206"/>
<dbReference type="SwissLipids" id="SLP:000000977"/>
<dbReference type="TCDB" id="4.C.1.1.3">
    <property type="family name" value="the fatty acid group translocation (fat) family"/>
</dbReference>
<dbReference type="PaxDb" id="83332-Rv1206"/>
<dbReference type="DNASU" id="887549"/>
<dbReference type="GeneID" id="45425176"/>
<dbReference type="GeneID" id="887549"/>
<dbReference type="KEGG" id="mtu:Rv1206"/>
<dbReference type="KEGG" id="mtv:RVBD_1206"/>
<dbReference type="PATRIC" id="fig|83332.111.peg.1348"/>
<dbReference type="TubercuList" id="Rv1206"/>
<dbReference type="eggNOG" id="COG0318">
    <property type="taxonomic scope" value="Bacteria"/>
</dbReference>
<dbReference type="InParanoid" id="O05307"/>
<dbReference type="OrthoDB" id="9803968at2"/>
<dbReference type="PhylomeDB" id="O05307"/>
<dbReference type="Proteomes" id="UP000001584">
    <property type="component" value="Chromosome"/>
</dbReference>
<dbReference type="GO" id="GO:0005886">
    <property type="term" value="C:plasma membrane"/>
    <property type="evidence" value="ECO:0000318"/>
    <property type="project" value="GO_Central"/>
</dbReference>
<dbReference type="GO" id="GO:0005524">
    <property type="term" value="F:ATP binding"/>
    <property type="evidence" value="ECO:0007669"/>
    <property type="project" value="UniProtKB-KW"/>
</dbReference>
<dbReference type="GO" id="GO:0005324">
    <property type="term" value="F:long-chain fatty acid transmembrane transporter activity"/>
    <property type="evidence" value="ECO:0000318"/>
    <property type="project" value="GO_Central"/>
</dbReference>
<dbReference type="GO" id="GO:0004467">
    <property type="term" value="F:long-chain fatty acid-CoA ligase activity"/>
    <property type="evidence" value="ECO:0000318"/>
    <property type="project" value="GO_Central"/>
</dbReference>
<dbReference type="GO" id="GO:0031956">
    <property type="term" value="F:medium-chain fatty acid-CoA ligase activity"/>
    <property type="evidence" value="ECO:0007669"/>
    <property type="project" value="UniProtKB-EC"/>
</dbReference>
<dbReference type="GO" id="GO:0044539">
    <property type="term" value="P:long-chain fatty acid import into cell"/>
    <property type="evidence" value="ECO:0000318"/>
    <property type="project" value="GO_Central"/>
</dbReference>
<dbReference type="GO" id="GO:0001676">
    <property type="term" value="P:long-chain fatty acid metabolic process"/>
    <property type="evidence" value="ECO:0000318"/>
    <property type="project" value="GO_Central"/>
</dbReference>
<dbReference type="CDD" id="cd05940">
    <property type="entry name" value="FATP_FACS"/>
    <property type="match status" value="1"/>
</dbReference>
<dbReference type="FunFam" id="3.30.300.30:FF:000020">
    <property type="entry name" value="Long-chain fatty acid transporter"/>
    <property type="match status" value="1"/>
</dbReference>
<dbReference type="Gene3D" id="3.30.300.30">
    <property type="match status" value="1"/>
</dbReference>
<dbReference type="Gene3D" id="3.40.50.12780">
    <property type="entry name" value="N-terminal domain of ligase-like"/>
    <property type="match status" value="1"/>
</dbReference>
<dbReference type="InterPro" id="IPR025110">
    <property type="entry name" value="AMP-bd_C"/>
</dbReference>
<dbReference type="InterPro" id="IPR045851">
    <property type="entry name" value="AMP-bd_C_sf"/>
</dbReference>
<dbReference type="InterPro" id="IPR020845">
    <property type="entry name" value="AMP-binding_CS"/>
</dbReference>
<dbReference type="InterPro" id="IPR000873">
    <property type="entry name" value="AMP-dep_synth/lig_dom"/>
</dbReference>
<dbReference type="InterPro" id="IPR042099">
    <property type="entry name" value="ANL_N_sf"/>
</dbReference>
<dbReference type="InterPro" id="IPR054874">
    <property type="entry name" value="FACL_FadD6"/>
</dbReference>
<dbReference type="NCBIfam" id="NF038342">
    <property type="entry name" value="FACL_FadD6"/>
    <property type="match status" value="1"/>
</dbReference>
<dbReference type="NCBIfam" id="NF006134">
    <property type="entry name" value="PRK08279.1"/>
    <property type="match status" value="1"/>
</dbReference>
<dbReference type="PANTHER" id="PTHR43107:SF15">
    <property type="entry name" value="FATTY ACID TRANSPORT PROTEIN 3, ISOFORM A"/>
    <property type="match status" value="1"/>
</dbReference>
<dbReference type="PANTHER" id="PTHR43107">
    <property type="entry name" value="LONG-CHAIN FATTY ACID TRANSPORT PROTEIN"/>
    <property type="match status" value="1"/>
</dbReference>
<dbReference type="Pfam" id="PF00501">
    <property type="entry name" value="AMP-binding"/>
    <property type="match status" value="1"/>
</dbReference>
<dbReference type="Pfam" id="PF13193">
    <property type="entry name" value="AMP-binding_C"/>
    <property type="match status" value="1"/>
</dbReference>
<dbReference type="SUPFAM" id="SSF56801">
    <property type="entry name" value="Acetyl-CoA synthetase-like"/>
    <property type="match status" value="1"/>
</dbReference>
<dbReference type="PROSITE" id="PS00455">
    <property type="entry name" value="AMP_BINDING"/>
    <property type="match status" value="1"/>
</dbReference>
<evidence type="ECO:0000269" key="1">
    <source>
    </source>
</evidence>
<evidence type="ECO:0000269" key="2">
    <source>
    </source>
</evidence>
<evidence type="ECO:0000269" key="3">
    <source>
    </source>
</evidence>
<evidence type="ECO:0000303" key="4">
    <source>
    </source>
</evidence>
<evidence type="ECO:0000305" key="5"/>
<evidence type="ECO:0000312" key="6">
    <source>
        <dbReference type="EMBL" id="CCP43962.1"/>
    </source>
</evidence>
<keyword id="KW-0067">ATP-binding</keyword>
<keyword id="KW-0276">Fatty acid metabolism</keyword>
<keyword id="KW-0436">Ligase</keyword>
<keyword id="KW-0443">Lipid metabolism</keyword>
<keyword id="KW-0547">Nucleotide-binding</keyword>
<keyword id="KW-1185">Reference proteome</keyword>
<sequence>MSDYYGGAHTTVRLIDLATRMPRVLADTPVIVRGAMTGLLARPNSKASIGTVFQDRAARYGDRVFLKFGDQQLTYRDANATANRYAAVLAARGVGPGDVVGIMLRNSPSTVLAMLATVKCGAIAGMLNYHQRGEVLAHSLGLLDAKVLIAESDLVSAVAECGASRGRVAGDVLTVEDVERFATTAPATNPASASAVQAKDTAFYIFTSGTTGFPKASVMTHHRWLRALAVFGGMGLRLKGSDTLYSCLPLYHNNALTVAVSSVINSGATLALGKSFSASRFWDEVIANRATAFVYIGEICRYLLNQPAKPTDRAHQVRVICGNGLRPEIWDEFTTRFGVARVCEFYAASEGNSAFINIFNVPRTAGVSPMPLAFVEYDLDTGDPLRDASGRVRRVPDGEPGLLLSRVNRLQPFDGYTDPVASEKKLVRNAFRDGDCWFNTGDVMSPQGMGHAAFVDRLGDTFRWKGENVATTQVEAALASDQTVEECTVYGVQIPRTGGRAGMAAITLRAGAEFDGQALARTVYGHLPGYALPLFVRVVGSLAHTTTFKSRKVELRNQAYGADIEDPLYVLAGPDEGYVPYYAEYPEEVSLGRRPQG</sequence>
<proteinExistence type="evidence at protein level"/>
<reference key="1">
    <citation type="journal article" date="1998" name="Nature">
        <title>Deciphering the biology of Mycobacterium tuberculosis from the complete genome sequence.</title>
        <authorList>
            <person name="Cole S.T."/>
            <person name="Brosch R."/>
            <person name="Parkhill J."/>
            <person name="Garnier T."/>
            <person name="Churcher C.M."/>
            <person name="Harris D.E."/>
            <person name="Gordon S.V."/>
            <person name="Eiglmeier K."/>
            <person name="Gas S."/>
            <person name="Barry C.E. III"/>
            <person name="Tekaia F."/>
            <person name="Badcock K."/>
            <person name="Basham D."/>
            <person name="Brown D."/>
            <person name="Chillingworth T."/>
            <person name="Connor R."/>
            <person name="Davies R.M."/>
            <person name="Devlin K."/>
            <person name="Feltwell T."/>
            <person name="Gentles S."/>
            <person name="Hamlin N."/>
            <person name="Holroyd S."/>
            <person name="Hornsby T."/>
            <person name="Jagels K."/>
            <person name="Krogh A."/>
            <person name="McLean J."/>
            <person name="Moule S."/>
            <person name="Murphy L.D."/>
            <person name="Oliver S."/>
            <person name="Osborne J."/>
            <person name="Quail M.A."/>
            <person name="Rajandream M.A."/>
            <person name="Rogers J."/>
            <person name="Rutter S."/>
            <person name="Seeger K."/>
            <person name="Skelton S."/>
            <person name="Squares S."/>
            <person name="Squares R."/>
            <person name="Sulston J.E."/>
            <person name="Taylor K."/>
            <person name="Whitehead S."/>
            <person name="Barrell B.G."/>
        </authorList>
    </citation>
    <scope>NUCLEOTIDE SEQUENCE [LARGE SCALE GENOMIC DNA]</scope>
    <source>
        <strain>ATCC 25618 / H37Rv</strain>
    </source>
</reference>
<reference key="2">
    <citation type="journal article" date="2005" name="J. Am. Chem. Soc.">
        <title>Promiscuous fatty acyl CoA ligases produce acyl-CoA and acyl-SNAC precursors for polyketide biosynthesis.</title>
        <authorList>
            <person name="Arora P."/>
            <person name="Vats A."/>
            <person name="Saxena P."/>
            <person name="Mohanty D."/>
            <person name="Gokhale R.S."/>
        </authorList>
    </citation>
    <scope>FUNCTION</scope>
    <scope>CATALYTIC ACTIVITY</scope>
</reference>
<reference key="3">
    <citation type="journal article" date="2009" name="Nat. Chem. Biol.">
        <title>Mechanistic and functional insights into fatty acid activation in Mycobacterium tuberculosis.</title>
        <authorList>
            <person name="Arora P."/>
            <person name="Goyal A."/>
            <person name="Natarajan V.T."/>
            <person name="Rajakumara E."/>
            <person name="Verma P."/>
            <person name="Gupta R."/>
            <person name="Yousuf M."/>
            <person name="Trivedi O.A."/>
            <person name="Mohanty D."/>
            <person name="Tyagi A."/>
            <person name="Sankaranarayanan R."/>
            <person name="Gokhale R.S."/>
        </authorList>
    </citation>
    <scope>FUNCTION</scope>
    <scope>CATALYTIC ACTIVITY</scope>
</reference>
<reference key="4">
    <citation type="journal article" date="2011" name="Mol. Cell. Proteomics">
        <title>Proteogenomic analysis of Mycobacterium tuberculosis by high resolution mass spectrometry.</title>
        <authorList>
            <person name="Kelkar D.S."/>
            <person name="Kumar D."/>
            <person name="Kumar P."/>
            <person name="Balakrishnan L."/>
            <person name="Muthusamy B."/>
            <person name="Yadav A.K."/>
            <person name="Shrivastava P."/>
            <person name="Marimuthu A."/>
            <person name="Anand S."/>
            <person name="Sundaram H."/>
            <person name="Kingsbury R."/>
            <person name="Harsha H.C."/>
            <person name="Nair B."/>
            <person name="Prasad T.S."/>
            <person name="Chauhan D.S."/>
            <person name="Katoch K."/>
            <person name="Katoch V.M."/>
            <person name="Kumar P."/>
            <person name="Chaerkady R."/>
            <person name="Ramachandran S."/>
            <person name="Dash D."/>
            <person name="Pandey A."/>
        </authorList>
    </citation>
    <scope>IDENTIFICATION BY MASS SPECTROMETRY [LARGE SCALE ANALYSIS]</scope>
    <source>
        <strain>ATCC 25618 / H37Rv</strain>
    </source>
</reference>
<reference key="5">
    <citation type="journal article" date="2014" name="PLoS ONE">
        <title>An acyl-CoA synthetase in Mycobacterium tuberculosis involved in triacylglycerol accumulation during dormancy.</title>
        <authorList>
            <person name="Daniel J."/>
            <person name="Sirakova T."/>
            <person name="Kolattukudy P."/>
        </authorList>
    </citation>
    <scope>FUNCTION</scope>
    <scope>CATALYTIC ACTIVITY</scope>
    <scope>INDUCTION</scope>
    <scope>DISRUPTION PHENOTYPE</scope>
    <source>
        <strain>H37Rv</strain>
    </source>
</reference>
<name>FAC6_MYCTU</name>
<comment type="function">
    <text evidence="1 2 3">Catalyzes the activation of medium/long-chain fatty acids as acyl-coenzyme A (acyl-CoA) (PubMed:15984864, PubMed:19182784, PubMed:25490545). May play a role in the uptake of fatty acids by trapping them metabolically as CoA esters (PubMed:25490545). May also play an important role in the channeling of fatty acids into triacylglycerol (TAG) for use by Mycobacterium during its dormancy (PubMed:25490545).</text>
</comment>
<comment type="catalytic activity">
    <reaction evidence="1 2">
        <text>a medium-chain fatty acid + ATP + CoA = a medium-chain fatty acyl-CoA + AMP + diphosphate</text>
        <dbReference type="Rhea" id="RHEA:48340"/>
        <dbReference type="ChEBI" id="CHEBI:30616"/>
        <dbReference type="ChEBI" id="CHEBI:33019"/>
        <dbReference type="ChEBI" id="CHEBI:57287"/>
        <dbReference type="ChEBI" id="CHEBI:59558"/>
        <dbReference type="ChEBI" id="CHEBI:90546"/>
        <dbReference type="ChEBI" id="CHEBI:456215"/>
        <dbReference type="EC" id="6.2.1.2"/>
    </reaction>
    <physiologicalReaction direction="left-to-right" evidence="1 2">
        <dbReference type="Rhea" id="RHEA:48341"/>
    </physiologicalReaction>
</comment>
<comment type="catalytic activity">
    <reaction evidence="1 2 3">
        <text>a long-chain fatty acid + ATP + CoA = a long-chain fatty acyl-CoA + AMP + diphosphate</text>
        <dbReference type="Rhea" id="RHEA:15421"/>
        <dbReference type="ChEBI" id="CHEBI:30616"/>
        <dbReference type="ChEBI" id="CHEBI:33019"/>
        <dbReference type="ChEBI" id="CHEBI:57287"/>
        <dbReference type="ChEBI" id="CHEBI:57560"/>
        <dbReference type="ChEBI" id="CHEBI:83139"/>
        <dbReference type="ChEBI" id="CHEBI:456215"/>
        <dbReference type="EC" id="6.2.1.3"/>
    </reaction>
    <physiologicalReaction direction="left-to-right" evidence="1 2 3">
        <dbReference type="Rhea" id="RHEA:15422"/>
    </physiologicalReaction>
</comment>
<comment type="catalytic activity">
    <reaction evidence="1 2">
        <text>hexanoate + ATP + CoA = hexanoyl-CoA + AMP + diphosphate</text>
        <dbReference type="Rhea" id="RHEA:43740"/>
        <dbReference type="ChEBI" id="CHEBI:17120"/>
        <dbReference type="ChEBI" id="CHEBI:30616"/>
        <dbReference type="ChEBI" id="CHEBI:33019"/>
        <dbReference type="ChEBI" id="CHEBI:57287"/>
        <dbReference type="ChEBI" id="CHEBI:62620"/>
        <dbReference type="ChEBI" id="CHEBI:456215"/>
    </reaction>
    <physiologicalReaction direction="left-to-right" evidence="1 2">
        <dbReference type="Rhea" id="RHEA:43741"/>
    </physiologicalReaction>
</comment>
<comment type="catalytic activity">
    <reaction evidence="1">
        <text>octanoate + ATP + CoA = octanoyl-CoA + AMP + diphosphate</text>
        <dbReference type="Rhea" id="RHEA:33631"/>
        <dbReference type="ChEBI" id="CHEBI:25646"/>
        <dbReference type="ChEBI" id="CHEBI:30616"/>
        <dbReference type="ChEBI" id="CHEBI:33019"/>
        <dbReference type="ChEBI" id="CHEBI:57287"/>
        <dbReference type="ChEBI" id="CHEBI:57386"/>
        <dbReference type="ChEBI" id="CHEBI:456215"/>
    </reaction>
    <physiologicalReaction direction="left-to-right" evidence="1">
        <dbReference type="Rhea" id="RHEA:33632"/>
    </physiologicalReaction>
</comment>
<comment type="catalytic activity">
    <reaction evidence="1">
        <text>decanoate + ATP + CoA = decanoyl-CoA + AMP + diphosphate</text>
        <dbReference type="Rhea" id="RHEA:33627"/>
        <dbReference type="ChEBI" id="CHEBI:27689"/>
        <dbReference type="ChEBI" id="CHEBI:30616"/>
        <dbReference type="ChEBI" id="CHEBI:33019"/>
        <dbReference type="ChEBI" id="CHEBI:57287"/>
        <dbReference type="ChEBI" id="CHEBI:61430"/>
        <dbReference type="ChEBI" id="CHEBI:456215"/>
    </reaction>
    <physiologicalReaction direction="left-to-right" evidence="1">
        <dbReference type="Rhea" id="RHEA:33628"/>
    </physiologicalReaction>
</comment>
<comment type="catalytic activity">
    <reaction evidence="1 2">
        <text>dodecanoate + ATP + CoA = dodecanoyl-CoA + AMP + diphosphate</text>
        <dbReference type="Rhea" id="RHEA:33623"/>
        <dbReference type="ChEBI" id="CHEBI:18262"/>
        <dbReference type="ChEBI" id="CHEBI:30616"/>
        <dbReference type="ChEBI" id="CHEBI:33019"/>
        <dbReference type="ChEBI" id="CHEBI:57287"/>
        <dbReference type="ChEBI" id="CHEBI:57375"/>
        <dbReference type="ChEBI" id="CHEBI:456215"/>
    </reaction>
    <physiologicalReaction direction="left-to-right" evidence="1 2">
        <dbReference type="Rhea" id="RHEA:33624"/>
    </physiologicalReaction>
</comment>
<comment type="catalytic activity">
    <reaction evidence="1">
        <text>tetradecanoate + ATP + CoA = tetradecanoyl-CoA + AMP + diphosphate</text>
        <dbReference type="Rhea" id="RHEA:33619"/>
        <dbReference type="ChEBI" id="CHEBI:30616"/>
        <dbReference type="ChEBI" id="CHEBI:30807"/>
        <dbReference type="ChEBI" id="CHEBI:33019"/>
        <dbReference type="ChEBI" id="CHEBI:57287"/>
        <dbReference type="ChEBI" id="CHEBI:57385"/>
        <dbReference type="ChEBI" id="CHEBI:456215"/>
    </reaction>
    <physiologicalReaction direction="left-to-right" evidence="1">
        <dbReference type="Rhea" id="RHEA:33620"/>
    </physiologicalReaction>
</comment>
<comment type="catalytic activity">
    <reaction evidence="1 2 3">
        <text>hexadecanoate + ATP + CoA = hexadecanoyl-CoA + AMP + diphosphate</text>
        <dbReference type="Rhea" id="RHEA:30751"/>
        <dbReference type="ChEBI" id="CHEBI:7896"/>
        <dbReference type="ChEBI" id="CHEBI:30616"/>
        <dbReference type="ChEBI" id="CHEBI:33019"/>
        <dbReference type="ChEBI" id="CHEBI:57287"/>
        <dbReference type="ChEBI" id="CHEBI:57379"/>
        <dbReference type="ChEBI" id="CHEBI:456215"/>
    </reaction>
    <physiologicalReaction direction="left-to-right" evidence="1 2 3">
        <dbReference type="Rhea" id="RHEA:30752"/>
    </physiologicalReaction>
</comment>
<comment type="catalytic activity">
    <reaction evidence="1 3">
        <text>octadecanoate + ATP + CoA = octadecanoyl-CoA + AMP + diphosphate</text>
        <dbReference type="Rhea" id="RHEA:33615"/>
        <dbReference type="ChEBI" id="CHEBI:25629"/>
        <dbReference type="ChEBI" id="CHEBI:30616"/>
        <dbReference type="ChEBI" id="CHEBI:33019"/>
        <dbReference type="ChEBI" id="CHEBI:57287"/>
        <dbReference type="ChEBI" id="CHEBI:57394"/>
        <dbReference type="ChEBI" id="CHEBI:456215"/>
    </reaction>
    <physiologicalReaction direction="left-to-right" evidence="1 3">
        <dbReference type="Rhea" id="RHEA:33616"/>
    </physiologicalReaction>
</comment>
<comment type="catalytic activity">
    <reaction evidence="1">
        <text>9-decenoate + ATP + CoA = 9-decenoyl-CoA + AMP + diphosphate</text>
        <dbReference type="Rhea" id="RHEA:44228"/>
        <dbReference type="ChEBI" id="CHEBI:30616"/>
        <dbReference type="ChEBI" id="CHEBI:33019"/>
        <dbReference type="ChEBI" id="CHEBI:33163"/>
        <dbReference type="ChEBI" id="CHEBI:57287"/>
        <dbReference type="ChEBI" id="CHEBI:84214"/>
        <dbReference type="ChEBI" id="CHEBI:456215"/>
    </reaction>
    <physiologicalReaction direction="left-to-right" evidence="1">
        <dbReference type="Rhea" id="RHEA:44229"/>
    </physiologicalReaction>
</comment>
<comment type="catalytic activity">
    <reaction evidence="1 3">
        <text>(9Z)-octadecenoate + ATP + CoA = (9Z)-octadecenoyl-CoA + AMP + diphosphate</text>
        <dbReference type="Rhea" id="RHEA:33607"/>
        <dbReference type="ChEBI" id="CHEBI:30616"/>
        <dbReference type="ChEBI" id="CHEBI:30823"/>
        <dbReference type="ChEBI" id="CHEBI:33019"/>
        <dbReference type="ChEBI" id="CHEBI:57287"/>
        <dbReference type="ChEBI" id="CHEBI:57387"/>
        <dbReference type="ChEBI" id="CHEBI:456215"/>
    </reaction>
    <physiologicalReaction direction="left-to-right" evidence="1 3">
        <dbReference type="Rhea" id="RHEA:33608"/>
    </physiologicalReaction>
</comment>
<comment type="catalytic activity">
    <reaction evidence="1">
        <text>2-hydroxyhexadecanoate + ATP + CoA = 2-hydroxyhexadecanoyl-CoA + AMP + diphosphate</text>
        <dbReference type="Rhea" id="RHEA:44204"/>
        <dbReference type="ChEBI" id="CHEBI:30616"/>
        <dbReference type="ChEBI" id="CHEBI:33019"/>
        <dbReference type="ChEBI" id="CHEBI:57287"/>
        <dbReference type="ChEBI" id="CHEBI:65097"/>
        <dbReference type="ChEBI" id="CHEBI:74115"/>
        <dbReference type="ChEBI" id="CHEBI:456215"/>
    </reaction>
    <physiologicalReaction direction="left-to-right" evidence="1">
        <dbReference type="Rhea" id="RHEA:44205"/>
    </physiologicalReaction>
</comment>
<comment type="catalytic activity">
    <reaction evidence="1">
        <text>3-hydroxytetradecanoate + ATP + CoA = 3-hydroxytetradecanoyl-CoA + AMP + diphosphate</text>
        <dbReference type="Rhea" id="RHEA:44212"/>
        <dbReference type="ChEBI" id="CHEBI:30616"/>
        <dbReference type="ChEBI" id="CHEBI:33019"/>
        <dbReference type="ChEBI" id="CHEBI:57287"/>
        <dbReference type="ChEBI" id="CHEBI:84197"/>
        <dbReference type="ChEBI" id="CHEBI:84198"/>
        <dbReference type="ChEBI" id="CHEBI:456215"/>
    </reaction>
    <physiologicalReaction direction="left-to-right" evidence="1">
        <dbReference type="Rhea" id="RHEA:44213"/>
    </physiologicalReaction>
</comment>
<comment type="catalytic activity">
    <reaction evidence="1">
        <text>12-hydroxyoctadecanoate + ATP + CoA = 12-hydroxyoctadecanoyl-CoA + AMP + diphosphate</text>
        <dbReference type="Rhea" id="RHEA:44216"/>
        <dbReference type="ChEBI" id="CHEBI:30616"/>
        <dbReference type="ChEBI" id="CHEBI:33019"/>
        <dbReference type="ChEBI" id="CHEBI:57287"/>
        <dbReference type="ChEBI" id="CHEBI:84201"/>
        <dbReference type="ChEBI" id="CHEBI:84202"/>
        <dbReference type="ChEBI" id="CHEBI:456215"/>
    </reaction>
    <physiologicalReaction direction="left-to-right" evidence="1">
        <dbReference type="Rhea" id="RHEA:44217"/>
    </physiologicalReaction>
</comment>
<comment type="catalytic activity">
    <reaction evidence="1">
        <text>15-hydroxypentadecanoate + ATP + CoA = 15-hydroxypentadecanoyl-CoA + AMP + diphosphate</text>
        <dbReference type="Rhea" id="RHEA:44220"/>
        <dbReference type="ChEBI" id="CHEBI:30616"/>
        <dbReference type="ChEBI" id="CHEBI:33019"/>
        <dbReference type="ChEBI" id="CHEBI:57287"/>
        <dbReference type="ChEBI" id="CHEBI:84203"/>
        <dbReference type="ChEBI" id="CHEBI:84205"/>
        <dbReference type="ChEBI" id="CHEBI:456215"/>
    </reaction>
    <physiologicalReaction direction="left-to-right" evidence="1">
        <dbReference type="Rhea" id="RHEA:44221"/>
    </physiologicalReaction>
</comment>
<comment type="catalytic activity">
    <reaction evidence="1">
        <text>16-hydroxyhexadecanoate + ATP + CoA = 16-hydroxyhexadecanoyl-CoA + AMP + diphosphate</text>
        <dbReference type="Rhea" id="RHEA:44224"/>
        <dbReference type="ChEBI" id="CHEBI:30616"/>
        <dbReference type="ChEBI" id="CHEBI:33019"/>
        <dbReference type="ChEBI" id="CHEBI:55329"/>
        <dbReference type="ChEBI" id="CHEBI:57287"/>
        <dbReference type="ChEBI" id="CHEBI:84207"/>
        <dbReference type="ChEBI" id="CHEBI:456215"/>
    </reaction>
    <physiologicalReaction direction="left-to-right" evidence="1">
        <dbReference type="Rhea" id="RHEA:44225"/>
    </physiologicalReaction>
</comment>
<comment type="catalytic activity">
    <reaction evidence="1">
        <text>2-methylhexadecanoate + ATP + CoA = 2-methylhexadecanoyl-CoA + AMP + diphosphate</text>
        <dbReference type="Rhea" id="RHEA:44192"/>
        <dbReference type="ChEBI" id="CHEBI:30616"/>
        <dbReference type="ChEBI" id="CHEBI:33019"/>
        <dbReference type="ChEBI" id="CHEBI:57287"/>
        <dbReference type="ChEBI" id="CHEBI:84175"/>
        <dbReference type="ChEBI" id="CHEBI:84182"/>
        <dbReference type="ChEBI" id="CHEBI:456215"/>
    </reaction>
    <physiologicalReaction direction="left-to-right" evidence="1">
        <dbReference type="Rhea" id="RHEA:44193"/>
    </physiologicalReaction>
</comment>
<comment type="catalytic activity">
    <reaction evidence="1">
        <text>3-methylundecanoate + ATP + CoA = 3-methylundecanoyl-CoA + AMP + diphosphate</text>
        <dbReference type="Rhea" id="RHEA:44196"/>
        <dbReference type="ChEBI" id="CHEBI:30616"/>
        <dbReference type="ChEBI" id="CHEBI:33019"/>
        <dbReference type="ChEBI" id="CHEBI:57287"/>
        <dbReference type="ChEBI" id="CHEBI:84183"/>
        <dbReference type="ChEBI" id="CHEBI:84184"/>
        <dbReference type="ChEBI" id="CHEBI:456215"/>
    </reaction>
    <physiologicalReaction direction="left-to-right" evidence="1">
        <dbReference type="Rhea" id="RHEA:44197"/>
    </physiologicalReaction>
</comment>
<comment type="catalytic activity">
    <reaction evidence="1">
        <text>12-methyltridecanoate + ATP + CoA = 12-methyltridecanoyl-CoA + AMP + diphosphate</text>
        <dbReference type="Rhea" id="RHEA:44208"/>
        <dbReference type="ChEBI" id="CHEBI:30616"/>
        <dbReference type="ChEBI" id="CHEBI:33019"/>
        <dbReference type="ChEBI" id="CHEBI:57287"/>
        <dbReference type="ChEBI" id="CHEBI:84193"/>
        <dbReference type="ChEBI" id="CHEBI:84195"/>
        <dbReference type="ChEBI" id="CHEBI:456215"/>
    </reaction>
    <physiologicalReaction direction="left-to-right" evidence="1">
        <dbReference type="Rhea" id="RHEA:44209"/>
    </physiologicalReaction>
</comment>
<comment type="catalytic activity">
    <reaction evidence="1">
        <text>12-methyloctadecanoate + ATP + CoA = 12-methyloctadecanoyl-CoA + AMP + diphosphate</text>
        <dbReference type="Rhea" id="RHEA:44200"/>
        <dbReference type="ChEBI" id="CHEBI:30616"/>
        <dbReference type="ChEBI" id="CHEBI:33019"/>
        <dbReference type="ChEBI" id="CHEBI:57287"/>
        <dbReference type="ChEBI" id="CHEBI:84176"/>
        <dbReference type="ChEBI" id="CHEBI:84181"/>
        <dbReference type="ChEBI" id="CHEBI:456215"/>
    </reaction>
    <physiologicalReaction direction="left-to-right" evidence="1">
        <dbReference type="Rhea" id="RHEA:44201"/>
    </physiologicalReaction>
</comment>
<comment type="induction">
    <text evidence="3">Expression is significantly increased during in vitro dormancy (at protein level).</text>
</comment>
<comment type="disruption phenotype">
    <text evidence="3">Deletion mutant displays a diminished ability to synthesize acyl-coenzyme A in cell-free extracts. Deletion of the gene results in a significant decrease in the accumulation of intracellular triacylglycerol (TAG) in Mycobacterium under dormancy-inducing conditions in vitro.</text>
</comment>
<comment type="miscellaneous">
    <text evidence="3">Stimulates fatty acid uptake in E.coli cells.</text>
</comment>
<comment type="similarity">
    <text evidence="5">Belongs to the ATP-dependent AMP-binding enzyme family.</text>
</comment>
<accession>O05307</accession>
<accession>F2GFY2</accession>
<accession>I6Y9X8</accession>
<accession>Q7D8M1</accession>